<feature type="chain" id="PRO_1000125142" description="Fluoride-specific ion channel FluC">
    <location>
        <begin position="1"/>
        <end position="127"/>
    </location>
</feature>
<feature type="transmembrane region" description="Helical" evidence="1">
    <location>
        <begin position="3"/>
        <end position="23"/>
    </location>
</feature>
<feature type="transmembrane region" description="Helical" evidence="1">
    <location>
        <begin position="36"/>
        <end position="56"/>
    </location>
</feature>
<feature type="transmembrane region" description="Helical" evidence="1">
    <location>
        <begin position="72"/>
        <end position="92"/>
    </location>
</feature>
<feature type="transmembrane region" description="Helical" evidence="1">
    <location>
        <begin position="101"/>
        <end position="121"/>
    </location>
</feature>
<feature type="binding site" evidence="1">
    <location>
        <position position="76"/>
    </location>
    <ligand>
        <name>Na(+)</name>
        <dbReference type="ChEBI" id="CHEBI:29101"/>
        <note>structural</note>
    </ligand>
</feature>
<feature type="binding site" evidence="1">
    <location>
        <position position="79"/>
    </location>
    <ligand>
        <name>Na(+)</name>
        <dbReference type="ChEBI" id="CHEBI:29101"/>
        <note>structural</note>
    </ligand>
</feature>
<accession>B4R910</accession>
<sequence length="127" mass="12988">MQALLLVGAGGAAGAVARYLLGVQALRWLGPGWPYGTFAANILGGFLMGLLAGGLAHRGGAGQETWRLLLGVGALGGFTTFSAYSLEVALMIERRAYGQAFAYSLGSVALAVAALFAGLLLARRVFA</sequence>
<organism>
    <name type="scientific">Phenylobacterium zucineum (strain HLK1)</name>
    <dbReference type="NCBI Taxonomy" id="450851"/>
    <lineage>
        <taxon>Bacteria</taxon>
        <taxon>Pseudomonadati</taxon>
        <taxon>Pseudomonadota</taxon>
        <taxon>Alphaproteobacteria</taxon>
        <taxon>Caulobacterales</taxon>
        <taxon>Caulobacteraceae</taxon>
        <taxon>Phenylobacterium</taxon>
    </lineage>
</organism>
<evidence type="ECO:0000255" key="1">
    <source>
        <dbReference type="HAMAP-Rule" id="MF_00454"/>
    </source>
</evidence>
<protein>
    <recommendedName>
        <fullName evidence="1">Fluoride-specific ion channel FluC</fullName>
    </recommendedName>
</protein>
<comment type="function">
    <text evidence="1">Fluoride-specific ion channel. Important for reducing fluoride concentration in the cell, thus reducing its toxicity.</text>
</comment>
<comment type="catalytic activity">
    <reaction evidence="1">
        <text>fluoride(in) = fluoride(out)</text>
        <dbReference type="Rhea" id="RHEA:76159"/>
        <dbReference type="ChEBI" id="CHEBI:17051"/>
    </reaction>
    <physiologicalReaction direction="left-to-right" evidence="1">
        <dbReference type="Rhea" id="RHEA:76160"/>
    </physiologicalReaction>
</comment>
<comment type="activity regulation">
    <text evidence="1">Na(+) is not transported, but it plays an essential structural role and its presence is essential for fluoride channel function.</text>
</comment>
<comment type="subcellular location">
    <subcellularLocation>
        <location evidence="1">Cell inner membrane</location>
        <topology evidence="1">Multi-pass membrane protein</topology>
    </subcellularLocation>
</comment>
<comment type="similarity">
    <text evidence="1">Belongs to the fluoride channel Fluc/FEX (TC 1.A.43) family.</text>
</comment>
<dbReference type="EMBL" id="CP000747">
    <property type="protein sequence ID" value="ACG77680.1"/>
    <property type="molecule type" value="Genomic_DNA"/>
</dbReference>
<dbReference type="RefSeq" id="WP_012521824.1">
    <property type="nucleotide sequence ID" value="NC_011144.1"/>
</dbReference>
<dbReference type="SMR" id="B4R910"/>
<dbReference type="STRING" id="450851.PHZ_c1266"/>
<dbReference type="KEGG" id="pzu:PHZ_c1266"/>
<dbReference type="eggNOG" id="COG0239">
    <property type="taxonomic scope" value="Bacteria"/>
</dbReference>
<dbReference type="HOGENOM" id="CLU_114342_3_0_5"/>
<dbReference type="OrthoDB" id="9806299at2"/>
<dbReference type="Proteomes" id="UP000001868">
    <property type="component" value="Chromosome"/>
</dbReference>
<dbReference type="GO" id="GO:0005886">
    <property type="term" value="C:plasma membrane"/>
    <property type="evidence" value="ECO:0007669"/>
    <property type="project" value="UniProtKB-SubCell"/>
</dbReference>
<dbReference type="GO" id="GO:0062054">
    <property type="term" value="F:fluoride channel activity"/>
    <property type="evidence" value="ECO:0007669"/>
    <property type="project" value="UniProtKB-UniRule"/>
</dbReference>
<dbReference type="GO" id="GO:0046872">
    <property type="term" value="F:metal ion binding"/>
    <property type="evidence" value="ECO:0007669"/>
    <property type="project" value="UniProtKB-KW"/>
</dbReference>
<dbReference type="GO" id="GO:0140114">
    <property type="term" value="P:cellular detoxification of fluoride"/>
    <property type="evidence" value="ECO:0007669"/>
    <property type="project" value="UniProtKB-UniRule"/>
</dbReference>
<dbReference type="HAMAP" id="MF_00454">
    <property type="entry name" value="FluC"/>
    <property type="match status" value="1"/>
</dbReference>
<dbReference type="InterPro" id="IPR003691">
    <property type="entry name" value="FluC"/>
</dbReference>
<dbReference type="NCBIfam" id="TIGR00494">
    <property type="entry name" value="crcB"/>
    <property type="match status" value="1"/>
</dbReference>
<dbReference type="NCBIfam" id="NF010791">
    <property type="entry name" value="PRK14195.1"/>
    <property type="match status" value="1"/>
</dbReference>
<dbReference type="PANTHER" id="PTHR28259">
    <property type="entry name" value="FLUORIDE EXPORT PROTEIN 1-RELATED"/>
    <property type="match status" value="1"/>
</dbReference>
<dbReference type="PANTHER" id="PTHR28259:SF1">
    <property type="entry name" value="FLUORIDE EXPORT PROTEIN 1-RELATED"/>
    <property type="match status" value="1"/>
</dbReference>
<dbReference type="Pfam" id="PF02537">
    <property type="entry name" value="CRCB"/>
    <property type="match status" value="1"/>
</dbReference>
<name>FLUC_PHEZH</name>
<reference key="1">
    <citation type="journal article" date="2008" name="BMC Genomics">
        <title>Complete genome of Phenylobacterium zucineum - a novel facultative intracellular bacterium isolated from human erythroleukemia cell line K562.</title>
        <authorList>
            <person name="Luo Y."/>
            <person name="Xu X."/>
            <person name="Ding Z."/>
            <person name="Liu Z."/>
            <person name="Zhang B."/>
            <person name="Yan Z."/>
            <person name="Sun J."/>
            <person name="Hu S."/>
            <person name="Hu X."/>
        </authorList>
    </citation>
    <scope>NUCLEOTIDE SEQUENCE [LARGE SCALE GENOMIC DNA]</scope>
    <source>
        <strain>HLK1</strain>
    </source>
</reference>
<gene>
    <name evidence="1" type="primary">fluC</name>
    <name evidence="1" type="synonym">crcB</name>
    <name type="ordered locus">PHZ_c1266</name>
</gene>
<keyword id="KW-0997">Cell inner membrane</keyword>
<keyword id="KW-1003">Cell membrane</keyword>
<keyword id="KW-0407">Ion channel</keyword>
<keyword id="KW-0406">Ion transport</keyword>
<keyword id="KW-0472">Membrane</keyword>
<keyword id="KW-0479">Metal-binding</keyword>
<keyword id="KW-1185">Reference proteome</keyword>
<keyword id="KW-0915">Sodium</keyword>
<keyword id="KW-0812">Transmembrane</keyword>
<keyword id="KW-1133">Transmembrane helix</keyword>
<keyword id="KW-0813">Transport</keyword>
<proteinExistence type="inferred from homology"/>